<dbReference type="EMBL" id="M61745">
    <property type="protein sequence ID" value="AAA79511.1"/>
    <property type="molecule type" value="mRNA"/>
</dbReference>
<dbReference type="PIR" id="A38749">
    <property type="entry name" value="A38749"/>
</dbReference>
<dbReference type="RefSeq" id="NP_777000.1">
    <property type="nucleotide sequence ID" value="NM_174575.1"/>
</dbReference>
<dbReference type="RefSeq" id="XP_005221493.1">
    <property type="nucleotide sequence ID" value="XM_005221436.5"/>
</dbReference>
<dbReference type="RefSeq" id="XP_024836981.1">
    <property type="nucleotide sequence ID" value="XM_024981213.2"/>
</dbReference>
<dbReference type="PDB" id="1BFI">
    <property type="method" value="NMR"/>
    <property type="chains" value="A=614-724"/>
</dbReference>
<dbReference type="PDB" id="1BFJ">
    <property type="method" value="NMR"/>
    <property type="chains" value="A=614-724"/>
</dbReference>
<dbReference type="PDB" id="1OO3">
    <property type="method" value="NMR"/>
    <property type="chains" value="A=321-431"/>
</dbReference>
<dbReference type="PDB" id="1OO4">
    <property type="method" value="NMR"/>
    <property type="chains" value="A=321-431"/>
</dbReference>
<dbReference type="PDB" id="1PNJ">
    <property type="method" value="NMR"/>
    <property type="chains" value="A=1-84"/>
</dbReference>
<dbReference type="PDB" id="1QAD">
    <property type="method" value="X-ray"/>
    <property type="resolution" value="1.80 A"/>
    <property type="chains" value="A=614-724"/>
</dbReference>
<dbReference type="PDB" id="2PNA">
    <property type="method" value="NMR"/>
    <property type="chains" value="A=328-431"/>
</dbReference>
<dbReference type="PDB" id="2PNB">
    <property type="method" value="NMR"/>
    <property type="chains" value="A=328-431"/>
</dbReference>
<dbReference type="PDB" id="2PNI">
    <property type="method" value="NMR"/>
    <property type="chains" value="A=1-84"/>
</dbReference>
<dbReference type="PDB" id="5DXH">
    <property type="method" value="X-ray"/>
    <property type="resolution" value="3.00 A"/>
    <property type="chains" value="B/E=431-599"/>
</dbReference>
<dbReference type="PDB" id="5DXU">
    <property type="method" value="X-ray"/>
    <property type="resolution" value="2.64 A"/>
    <property type="chains" value="B=431-599"/>
</dbReference>
<dbReference type="PDB" id="5T8F">
    <property type="method" value="X-ray"/>
    <property type="resolution" value="2.91 A"/>
    <property type="chains" value="B=431-599"/>
</dbReference>
<dbReference type="PDB" id="6D81">
    <property type="method" value="X-ray"/>
    <property type="resolution" value="2.25 A"/>
    <property type="chains" value="A/B=110-302"/>
</dbReference>
<dbReference type="PDB" id="6D82">
    <property type="method" value="X-ray"/>
    <property type="resolution" value="2.41 A"/>
    <property type="chains" value="A/B=110-302"/>
</dbReference>
<dbReference type="PDB" id="6D85">
    <property type="method" value="X-ray"/>
    <property type="resolution" value="2.20 A"/>
    <property type="chains" value="A/B=110-302"/>
</dbReference>
<dbReference type="PDB" id="6D86">
    <property type="method" value="X-ray"/>
    <property type="resolution" value="2.30 A"/>
    <property type="chains" value="A/B=110-302"/>
</dbReference>
<dbReference type="PDB" id="6D87">
    <property type="method" value="X-ray"/>
    <property type="resolution" value="2.70 A"/>
    <property type="chains" value="A/B=110-302"/>
</dbReference>
<dbReference type="PDB" id="6G6W">
    <property type="method" value="X-ray"/>
    <property type="resolution" value="2.72 A"/>
    <property type="chains" value="B=431-599"/>
</dbReference>
<dbReference type="PDB" id="6MRP">
    <property type="method" value="X-ray"/>
    <property type="resolution" value="2.40 A"/>
    <property type="chains" value="A/B=110-319"/>
</dbReference>
<dbReference type="PDB" id="6OCO">
    <property type="method" value="X-ray"/>
    <property type="resolution" value="2.58 A"/>
    <property type="chains" value="B=431-600"/>
</dbReference>
<dbReference type="PDB" id="6OCU">
    <property type="method" value="X-ray"/>
    <property type="resolution" value="2.77 A"/>
    <property type="chains" value="B=431-600"/>
</dbReference>
<dbReference type="PDB" id="6R4R">
    <property type="method" value="EM"/>
    <property type="resolution" value="3.40 A"/>
    <property type="chains" value="A/B/C/D/E/F/G=1-84"/>
</dbReference>
<dbReference type="PDB" id="7JIS">
    <property type="method" value="X-ray"/>
    <property type="resolution" value="2.42 A"/>
    <property type="chains" value="B=431-599"/>
</dbReference>
<dbReference type="PDB" id="8BCY">
    <property type="method" value="X-ray"/>
    <property type="resolution" value="2.43 A"/>
    <property type="chains" value="B=431-599"/>
</dbReference>
<dbReference type="PDB" id="8S3R">
    <property type="method" value="X-ray"/>
    <property type="resolution" value="2.28 A"/>
    <property type="chains" value="B=431-599"/>
</dbReference>
<dbReference type="PDB" id="9GCF">
    <property type="method" value="X-ray"/>
    <property type="resolution" value="2.89 A"/>
    <property type="chains" value="B=431-600"/>
</dbReference>
<dbReference type="PDB" id="9GDI">
    <property type="method" value="X-ray"/>
    <property type="resolution" value="2.81 A"/>
    <property type="chains" value="B=431-600"/>
</dbReference>
<dbReference type="PDBsum" id="1BFI"/>
<dbReference type="PDBsum" id="1BFJ"/>
<dbReference type="PDBsum" id="1OO3"/>
<dbReference type="PDBsum" id="1OO4"/>
<dbReference type="PDBsum" id="1PNJ"/>
<dbReference type="PDBsum" id="1QAD"/>
<dbReference type="PDBsum" id="2PNA"/>
<dbReference type="PDBsum" id="2PNB"/>
<dbReference type="PDBsum" id="2PNI"/>
<dbReference type="PDBsum" id="5DXH"/>
<dbReference type="PDBsum" id="5DXU"/>
<dbReference type="PDBsum" id="5T8F"/>
<dbReference type="PDBsum" id="6D81"/>
<dbReference type="PDBsum" id="6D82"/>
<dbReference type="PDBsum" id="6D85"/>
<dbReference type="PDBsum" id="6D86"/>
<dbReference type="PDBsum" id="6D87"/>
<dbReference type="PDBsum" id="6G6W"/>
<dbReference type="PDBsum" id="6MRP"/>
<dbReference type="PDBsum" id="6OCO"/>
<dbReference type="PDBsum" id="6OCU"/>
<dbReference type="PDBsum" id="6R4R"/>
<dbReference type="PDBsum" id="7JIS"/>
<dbReference type="PDBsum" id="8BCY"/>
<dbReference type="PDBsum" id="8S3R"/>
<dbReference type="PDBsum" id="9GCF"/>
<dbReference type="PDBsum" id="9GDI"/>
<dbReference type="BMRB" id="P23727"/>
<dbReference type="EMDB" id="EMD-4727"/>
<dbReference type="SMR" id="P23727"/>
<dbReference type="BioGRID" id="159569">
    <property type="interactions" value="1"/>
</dbReference>
<dbReference type="CORUM" id="P23727"/>
<dbReference type="DIP" id="DIP-34247N"/>
<dbReference type="FunCoup" id="P23727">
    <property type="interactions" value="2411"/>
</dbReference>
<dbReference type="IntAct" id="P23727">
    <property type="interactions" value="15"/>
</dbReference>
<dbReference type="MINT" id="P23727"/>
<dbReference type="STRING" id="9913.ENSBTAP00000014594"/>
<dbReference type="iPTMnet" id="P23727"/>
<dbReference type="PaxDb" id="9913-ENSBTAP00000014594"/>
<dbReference type="GeneID" id="282307"/>
<dbReference type="KEGG" id="bta:282307"/>
<dbReference type="CTD" id="5295"/>
<dbReference type="VEuPathDB" id="HostDB:ENSBTAG00000010989"/>
<dbReference type="eggNOG" id="KOG4637">
    <property type="taxonomic scope" value="Eukaryota"/>
</dbReference>
<dbReference type="HOGENOM" id="CLU_007031_1_0_1"/>
<dbReference type="InParanoid" id="P23727"/>
<dbReference type="OMA" id="EMIDVQV"/>
<dbReference type="OrthoDB" id="3175255at2759"/>
<dbReference type="TreeFam" id="TF102033"/>
<dbReference type="Reactome" id="R-BTA-109704">
    <property type="pathway name" value="PI3K Cascade"/>
</dbReference>
<dbReference type="Reactome" id="R-BTA-112399">
    <property type="pathway name" value="IRS-mediated signalling"/>
</dbReference>
<dbReference type="Reactome" id="R-BTA-114604">
    <property type="pathway name" value="GPVI-mediated activation cascade"/>
</dbReference>
<dbReference type="Reactome" id="R-BTA-1250342">
    <property type="pathway name" value="PI3K events in ERBB4 signaling"/>
</dbReference>
<dbReference type="Reactome" id="R-BTA-1257604">
    <property type="pathway name" value="PIP3 activates AKT signaling"/>
</dbReference>
<dbReference type="Reactome" id="R-BTA-1266695">
    <property type="pathway name" value="Interleukin-7 signaling"/>
</dbReference>
<dbReference type="Reactome" id="R-BTA-1433557">
    <property type="pathway name" value="Signaling by SCF-KIT"/>
</dbReference>
<dbReference type="Reactome" id="R-BTA-1660499">
    <property type="pathway name" value="Synthesis of PIPs at the plasma membrane"/>
</dbReference>
<dbReference type="Reactome" id="R-BTA-180292">
    <property type="pathway name" value="GAB1 signalosome"/>
</dbReference>
<dbReference type="Reactome" id="R-BTA-186763">
    <property type="pathway name" value="Downstream signal transduction"/>
</dbReference>
<dbReference type="Reactome" id="R-BTA-1963642">
    <property type="pathway name" value="PI3K events in ERBB2 signaling"/>
</dbReference>
<dbReference type="Reactome" id="R-BTA-198203">
    <property type="pathway name" value="PI3K/AKT activation"/>
</dbReference>
<dbReference type="Reactome" id="R-BTA-201556">
    <property type="pathway name" value="Signaling by ALK"/>
</dbReference>
<dbReference type="Reactome" id="R-BTA-202424">
    <property type="pathway name" value="Downstream TCR signaling"/>
</dbReference>
<dbReference type="Reactome" id="R-BTA-2029485">
    <property type="pathway name" value="Role of phospholipids in phagocytosis"/>
</dbReference>
<dbReference type="Reactome" id="R-BTA-210993">
    <property type="pathway name" value="Tie2 Signaling"/>
</dbReference>
<dbReference type="Reactome" id="R-BTA-2424491">
    <property type="pathway name" value="DAP12 signaling"/>
</dbReference>
<dbReference type="Reactome" id="R-BTA-2730905">
    <property type="pathway name" value="Role of LAT2/NTAL/LAB on calcium mobilization"/>
</dbReference>
<dbReference type="Reactome" id="R-BTA-389357">
    <property type="pathway name" value="CD28 dependent PI3K/Akt signaling"/>
</dbReference>
<dbReference type="Reactome" id="R-BTA-416476">
    <property type="pathway name" value="G alpha (q) signalling events"/>
</dbReference>
<dbReference type="Reactome" id="R-BTA-430116">
    <property type="pathway name" value="GP1b-IX-V activation signalling"/>
</dbReference>
<dbReference type="Reactome" id="R-BTA-4420097">
    <property type="pathway name" value="VEGFA-VEGFR2 Pathway"/>
</dbReference>
<dbReference type="Reactome" id="R-BTA-512988">
    <property type="pathway name" value="Interleukin-3, Interleukin-5 and GM-CSF signaling"/>
</dbReference>
<dbReference type="Reactome" id="R-BTA-5654689">
    <property type="pathway name" value="PI-3K cascade:FGFR1"/>
</dbReference>
<dbReference type="Reactome" id="R-BTA-5654695">
    <property type="pathway name" value="PI-3K cascade:FGFR2"/>
</dbReference>
<dbReference type="Reactome" id="R-BTA-5654710">
    <property type="pathway name" value="PI-3K cascade:FGFR3"/>
</dbReference>
<dbReference type="Reactome" id="R-BTA-5654720">
    <property type="pathway name" value="PI-3K cascade:FGFR4"/>
</dbReference>
<dbReference type="Reactome" id="R-BTA-5673001">
    <property type="pathway name" value="RAF/MAP kinase cascade"/>
</dbReference>
<dbReference type="Reactome" id="R-BTA-6811558">
    <property type="pathway name" value="PI5P, PP2A and IER3 Regulate PI3K/AKT Signaling"/>
</dbReference>
<dbReference type="Reactome" id="R-BTA-8851907">
    <property type="pathway name" value="MET activates PI3K/AKT signaling"/>
</dbReference>
<dbReference type="Reactome" id="R-BTA-8853659">
    <property type="pathway name" value="RET signaling"/>
</dbReference>
<dbReference type="Reactome" id="R-BTA-8980692">
    <property type="pathway name" value="RHOA GTPase cycle"/>
</dbReference>
<dbReference type="Reactome" id="R-BTA-9009391">
    <property type="pathway name" value="Extra-nuclear estrogen signaling"/>
</dbReference>
<dbReference type="Reactome" id="R-BTA-9013106">
    <property type="pathway name" value="RHOC GTPase cycle"/>
</dbReference>
<dbReference type="Reactome" id="R-BTA-9013148">
    <property type="pathway name" value="CDC42 GTPase cycle"/>
</dbReference>
<dbReference type="Reactome" id="R-BTA-9013149">
    <property type="pathway name" value="RAC1 GTPase cycle"/>
</dbReference>
<dbReference type="Reactome" id="R-BTA-9013404">
    <property type="pathway name" value="RAC2 GTPase cycle"/>
</dbReference>
<dbReference type="Reactome" id="R-BTA-9013405">
    <property type="pathway name" value="RHOD GTPase cycle"/>
</dbReference>
<dbReference type="Reactome" id="R-BTA-9013408">
    <property type="pathway name" value="RHOG GTPase cycle"/>
</dbReference>
<dbReference type="Reactome" id="R-BTA-9013409">
    <property type="pathway name" value="RHOJ GTPase cycle"/>
</dbReference>
<dbReference type="Reactome" id="R-BTA-9013420">
    <property type="pathway name" value="RHOU GTPase cycle"/>
</dbReference>
<dbReference type="Reactome" id="R-BTA-9013423">
    <property type="pathway name" value="RAC3 GTPase cycle"/>
</dbReference>
<dbReference type="Reactome" id="R-BTA-9013424">
    <property type="pathway name" value="RHOV GTPase cycle"/>
</dbReference>
<dbReference type="Reactome" id="R-BTA-9027276">
    <property type="pathway name" value="Erythropoietin activates Phosphoinositide-3-kinase (PI3K)"/>
</dbReference>
<dbReference type="Reactome" id="R-BTA-9035034">
    <property type="pathway name" value="RHOF GTPase cycle"/>
</dbReference>
<dbReference type="Reactome" id="R-BTA-912526">
    <property type="pathway name" value="Interleukin receptor SHC signaling"/>
</dbReference>
<dbReference type="Reactome" id="R-BTA-912631">
    <property type="pathway name" value="Regulation of signaling by CBL"/>
</dbReference>
<dbReference type="Reactome" id="R-BTA-9607240">
    <property type="pathway name" value="FLT3 Signaling"/>
</dbReference>
<dbReference type="Reactome" id="R-BTA-9696264">
    <property type="pathway name" value="RND3 GTPase cycle"/>
</dbReference>
<dbReference type="Reactome" id="R-BTA-9696270">
    <property type="pathway name" value="RND2 GTPase cycle"/>
</dbReference>
<dbReference type="Reactome" id="R-BTA-9696273">
    <property type="pathway name" value="RND1 GTPase cycle"/>
</dbReference>
<dbReference type="Reactome" id="R-BTA-983695">
    <property type="pathway name" value="Antigen activates B Cell Receptor (BCR) leading to generation of second messengers"/>
</dbReference>
<dbReference type="Reactome" id="R-BTA-9927354">
    <property type="pathway name" value="Co-stimulation by ICOS"/>
</dbReference>
<dbReference type="EvolutionaryTrace" id="P23727"/>
<dbReference type="Proteomes" id="UP000009136">
    <property type="component" value="Chromosome 20"/>
</dbReference>
<dbReference type="Bgee" id="ENSBTAG00000010989">
    <property type="expression patterns" value="Expressed in granulosa cell and 108 other cell types or tissues"/>
</dbReference>
<dbReference type="GO" id="GO:0005634">
    <property type="term" value="C:nucleus"/>
    <property type="evidence" value="ECO:0000250"/>
    <property type="project" value="UniProtKB"/>
</dbReference>
<dbReference type="GO" id="GO:0005942">
    <property type="term" value="C:phosphatidylinositol 3-kinase complex"/>
    <property type="evidence" value="ECO:0000314"/>
    <property type="project" value="BHF-UCL"/>
</dbReference>
<dbReference type="GO" id="GO:0005943">
    <property type="term" value="C:phosphatidylinositol 3-kinase complex, class IA"/>
    <property type="evidence" value="ECO:0000250"/>
    <property type="project" value="UniProtKB"/>
</dbReference>
<dbReference type="GO" id="GO:0046935">
    <property type="term" value="F:1-phosphatidylinositol-3-kinase regulator activity"/>
    <property type="evidence" value="ECO:0000318"/>
    <property type="project" value="GO_Central"/>
</dbReference>
<dbReference type="GO" id="GO:0140767">
    <property type="term" value="F:enzyme-substrate adaptor activity"/>
    <property type="evidence" value="ECO:0000314"/>
    <property type="project" value="BHF-UCL"/>
</dbReference>
<dbReference type="GO" id="GO:0043125">
    <property type="term" value="F:ErbB-3 class receptor binding"/>
    <property type="evidence" value="ECO:0000250"/>
    <property type="project" value="UniProtKB"/>
</dbReference>
<dbReference type="GO" id="GO:0042802">
    <property type="term" value="F:identical protein binding"/>
    <property type="evidence" value="ECO:0000353"/>
    <property type="project" value="IntAct"/>
</dbReference>
<dbReference type="GO" id="GO:0005158">
    <property type="term" value="F:insulin receptor binding"/>
    <property type="evidence" value="ECO:0000250"/>
    <property type="project" value="UniProtKB"/>
</dbReference>
<dbReference type="GO" id="GO:0043560">
    <property type="term" value="F:insulin receptor substrate binding"/>
    <property type="evidence" value="ECO:0000314"/>
    <property type="project" value="BHF-UCL"/>
</dbReference>
<dbReference type="GO" id="GO:0005159">
    <property type="term" value="F:insulin-like growth factor receptor binding"/>
    <property type="evidence" value="ECO:0000250"/>
    <property type="project" value="UniProtKB"/>
</dbReference>
<dbReference type="GO" id="GO:0141038">
    <property type="term" value="F:phosphatidylinositol 3-kinase activator activity"/>
    <property type="evidence" value="ECO:0000314"/>
    <property type="project" value="BHF-UCL"/>
</dbReference>
<dbReference type="GO" id="GO:0043548">
    <property type="term" value="F:phosphatidylinositol 3-kinase binding"/>
    <property type="evidence" value="ECO:0000353"/>
    <property type="project" value="BHF-UCL"/>
</dbReference>
<dbReference type="GO" id="GO:0035014">
    <property type="term" value="F:phosphatidylinositol 3-kinase regulator activity"/>
    <property type="evidence" value="ECO:0000250"/>
    <property type="project" value="UniProtKB"/>
</dbReference>
<dbReference type="GO" id="GO:0005068">
    <property type="term" value="F:transmembrane receptor protein tyrosine kinase adaptor activity"/>
    <property type="evidence" value="ECO:0000314"/>
    <property type="project" value="BHF-UCL"/>
</dbReference>
<dbReference type="GO" id="GO:0032869">
    <property type="term" value="P:cellular response to insulin stimulus"/>
    <property type="evidence" value="ECO:0000250"/>
    <property type="project" value="UniProtKB"/>
</dbReference>
<dbReference type="GO" id="GO:0008286">
    <property type="term" value="P:insulin receptor signaling pathway"/>
    <property type="evidence" value="ECO:0000315"/>
    <property type="project" value="BHF-UCL"/>
</dbReference>
<dbReference type="GO" id="GO:0048009">
    <property type="term" value="P:insulin-like growth factor receptor signaling pathway"/>
    <property type="evidence" value="ECO:0000250"/>
    <property type="project" value="UniProtKB"/>
</dbReference>
<dbReference type="GO" id="GO:0001678">
    <property type="term" value="P:intracellular glucose homeostasis"/>
    <property type="evidence" value="ECO:0000250"/>
    <property type="project" value="UniProtKB"/>
</dbReference>
<dbReference type="GO" id="GO:0043066">
    <property type="term" value="P:negative regulation of apoptotic process"/>
    <property type="evidence" value="ECO:0000250"/>
    <property type="project" value="UniProtKB"/>
</dbReference>
<dbReference type="GO" id="GO:0043491">
    <property type="term" value="P:phosphatidylinositol 3-kinase/protein kinase B signal transduction"/>
    <property type="evidence" value="ECO:0000314"/>
    <property type="project" value="BHF-UCL"/>
</dbReference>
<dbReference type="GO" id="GO:0046854">
    <property type="term" value="P:phosphatidylinositol phosphate biosynthetic process"/>
    <property type="evidence" value="ECO:0000314"/>
    <property type="project" value="BHF-UCL"/>
</dbReference>
<dbReference type="GO" id="GO:0046326">
    <property type="term" value="P:positive regulation of D-glucose import"/>
    <property type="evidence" value="ECO:0000315"/>
    <property type="project" value="BHF-UCL"/>
</dbReference>
<dbReference type="GO" id="GO:1900103">
    <property type="term" value="P:positive regulation of endoplasmic reticulum unfolded protein response"/>
    <property type="evidence" value="ECO:0000250"/>
    <property type="project" value="UniProtKB"/>
</dbReference>
<dbReference type="GO" id="GO:0042307">
    <property type="term" value="P:positive regulation of protein import into nucleus"/>
    <property type="evidence" value="ECO:0000250"/>
    <property type="project" value="UniProtKB"/>
</dbReference>
<dbReference type="GO" id="GO:1903078">
    <property type="term" value="P:positive regulation of protein localization to plasma membrane"/>
    <property type="evidence" value="ECO:0000315"/>
    <property type="project" value="BHF-UCL"/>
</dbReference>
<dbReference type="GO" id="GO:0033120">
    <property type="term" value="P:positive regulation of RNA splicing"/>
    <property type="evidence" value="ECO:0000250"/>
    <property type="project" value="UniProtKB"/>
</dbReference>
<dbReference type="GO" id="GO:0045944">
    <property type="term" value="P:positive regulation of transcription by RNA polymerase II"/>
    <property type="evidence" value="ECO:0000250"/>
    <property type="project" value="UniProtKB"/>
</dbReference>
<dbReference type="GO" id="GO:0050821">
    <property type="term" value="P:protein stabilization"/>
    <property type="evidence" value="ECO:0000250"/>
    <property type="project" value="UniProtKB"/>
</dbReference>
<dbReference type="GO" id="GO:0015031">
    <property type="term" value="P:protein transport"/>
    <property type="evidence" value="ECO:0007669"/>
    <property type="project" value="UniProtKB-KW"/>
</dbReference>
<dbReference type="GO" id="GO:0034976">
    <property type="term" value="P:response to endoplasmic reticulum stress"/>
    <property type="evidence" value="ECO:0000250"/>
    <property type="project" value="UniProtKB"/>
</dbReference>
<dbReference type="GO" id="GO:0034446">
    <property type="term" value="P:substrate adhesion-dependent cell spreading"/>
    <property type="evidence" value="ECO:0000315"/>
    <property type="project" value="BHF-UCL"/>
</dbReference>
<dbReference type="CDD" id="cd12924">
    <property type="entry name" value="iSH2_PIK3R1"/>
    <property type="match status" value="1"/>
</dbReference>
<dbReference type="CDD" id="cd04388">
    <property type="entry name" value="RhoGAP_p85"/>
    <property type="match status" value="1"/>
</dbReference>
<dbReference type="CDD" id="cd09930">
    <property type="entry name" value="SH2_cSH2_p85_like"/>
    <property type="match status" value="1"/>
</dbReference>
<dbReference type="CDD" id="cd09942">
    <property type="entry name" value="SH2_nSH2_p85_like"/>
    <property type="match status" value="1"/>
</dbReference>
<dbReference type="CDD" id="cd11910">
    <property type="entry name" value="SH3_PI3K_p85alpha"/>
    <property type="match status" value="1"/>
</dbReference>
<dbReference type="FunFam" id="1.10.555.10:FF:000035">
    <property type="entry name" value="Phosphatidylinositol 3-kinase regulatory subunit alpha"/>
    <property type="match status" value="1"/>
</dbReference>
<dbReference type="FunFam" id="3.30.505.10:FF:000006">
    <property type="entry name" value="Phosphatidylinositol 3-kinase regulatory subunit alpha"/>
    <property type="match status" value="1"/>
</dbReference>
<dbReference type="FunFam" id="3.30.505.10:FF:000014">
    <property type="entry name" value="Phosphatidylinositol 3-kinase regulatory subunit alpha"/>
    <property type="match status" value="1"/>
</dbReference>
<dbReference type="FunFam" id="2.30.30.40:FF:000075">
    <property type="entry name" value="phosphatidylinositol 3-kinase regulatory subunit alpha"/>
    <property type="match status" value="1"/>
</dbReference>
<dbReference type="FunFam" id="1.10.287.1490:FF:000001">
    <property type="entry name" value="Putative phosphatidylinositol 3-kinase regulatory subunit alpha"/>
    <property type="match status" value="1"/>
</dbReference>
<dbReference type="Gene3D" id="1.10.287.1490">
    <property type="match status" value="1"/>
</dbReference>
<dbReference type="Gene3D" id="1.10.555.10">
    <property type="entry name" value="Rho GTPase activation protein"/>
    <property type="match status" value="1"/>
</dbReference>
<dbReference type="Gene3D" id="3.30.505.10">
    <property type="entry name" value="SH2 domain"/>
    <property type="match status" value="2"/>
</dbReference>
<dbReference type="Gene3D" id="2.30.30.40">
    <property type="entry name" value="SH3 Domains"/>
    <property type="match status" value="1"/>
</dbReference>
<dbReference type="InterPro" id="IPR044124">
    <property type="entry name" value="ISH2_PIK3R1"/>
</dbReference>
<dbReference type="InterPro" id="IPR032498">
    <property type="entry name" value="PI3K_P85_iSH2"/>
</dbReference>
<dbReference type="InterPro" id="IPR035591">
    <property type="entry name" value="PI3K_p85alpha_SH3"/>
</dbReference>
<dbReference type="InterPro" id="IPR035020">
    <property type="entry name" value="PI3kinase_P85_cSH2"/>
</dbReference>
<dbReference type="InterPro" id="IPR035022">
    <property type="entry name" value="PI3kinase_P85_nSH2"/>
</dbReference>
<dbReference type="InterPro" id="IPR008936">
    <property type="entry name" value="Rho_GTPase_activation_prot"/>
</dbReference>
<dbReference type="InterPro" id="IPR000198">
    <property type="entry name" value="RhoGAP_dom"/>
</dbReference>
<dbReference type="InterPro" id="IPR000980">
    <property type="entry name" value="SH2"/>
</dbReference>
<dbReference type="InterPro" id="IPR036860">
    <property type="entry name" value="SH2_dom_sf"/>
</dbReference>
<dbReference type="InterPro" id="IPR036028">
    <property type="entry name" value="SH3-like_dom_sf"/>
</dbReference>
<dbReference type="InterPro" id="IPR001452">
    <property type="entry name" value="SH3_domain"/>
</dbReference>
<dbReference type="PANTHER" id="PTHR10155">
    <property type="entry name" value="PHOSPHATIDYLINOSITOL 3-KINASE REGULATORY SUBUNIT"/>
    <property type="match status" value="1"/>
</dbReference>
<dbReference type="PANTHER" id="PTHR10155:SF1">
    <property type="entry name" value="PHOSPHATIDYLINOSITOL 3-KINASE REGULATORY SUBUNIT BETA"/>
    <property type="match status" value="1"/>
</dbReference>
<dbReference type="Pfam" id="PF16454">
    <property type="entry name" value="PI3K_P85_iSH2"/>
    <property type="match status" value="1"/>
</dbReference>
<dbReference type="Pfam" id="PF00620">
    <property type="entry name" value="RhoGAP"/>
    <property type="match status" value="1"/>
</dbReference>
<dbReference type="Pfam" id="PF00017">
    <property type="entry name" value="SH2"/>
    <property type="match status" value="2"/>
</dbReference>
<dbReference type="PRINTS" id="PR00678">
    <property type="entry name" value="PI3KINASEP85"/>
</dbReference>
<dbReference type="PRINTS" id="PR00401">
    <property type="entry name" value="SH2DOMAIN"/>
</dbReference>
<dbReference type="SMART" id="SM00324">
    <property type="entry name" value="RhoGAP"/>
    <property type="match status" value="1"/>
</dbReference>
<dbReference type="SMART" id="SM00252">
    <property type="entry name" value="SH2"/>
    <property type="match status" value="2"/>
</dbReference>
<dbReference type="SMART" id="SM00326">
    <property type="entry name" value="SH3"/>
    <property type="match status" value="1"/>
</dbReference>
<dbReference type="SUPFAM" id="SSF48350">
    <property type="entry name" value="GTPase activation domain, GAP"/>
    <property type="match status" value="1"/>
</dbReference>
<dbReference type="SUPFAM" id="SSF55550">
    <property type="entry name" value="SH2 domain"/>
    <property type="match status" value="2"/>
</dbReference>
<dbReference type="SUPFAM" id="SSF50044">
    <property type="entry name" value="SH3-domain"/>
    <property type="match status" value="1"/>
</dbReference>
<dbReference type="PROSITE" id="PS50238">
    <property type="entry name" value="RHOGAP"/>
    <property type="match status" value="1"/>
</dbReference>
<dbReference type="PROSITE" id="PS50001">
    <property type="entry name" value="SH2"/>
    <property type="match status" value="2"/>
</dbReference>
<dbReference type="PROSITE" id="PS50002">
    <property type="entry name" value="SH3"/>
    <property type="match status" value="1"/>
</dbReference>
<evidence type="ECO:0000250" key="1"/>
<evidence type="ECO:0000250" key="2">
    <source>
        <dbReference type="UniProtKB" id="P26450"/>
    </source>
</evidence>
<evidence type="ECO:0000250" key="3">
    <source>
        <dbReference type="UniProtKB" id="P27986"/>
    </source>
</evidence>
<evidence type="ECO:0000250" key="4">
    <source>
        <dbReference type="UniProtKB" id="Q63787"/>
    </source>
</evidence>
<evidence type="ECO:0000255" key="5">
    <source>
        <dbReference type="PROSITE-ProRule" id="PRU00172"/>
    </source>
</evidence>
<evidence type="ECO:0000255" key="6">
    <source>
        <dbReference type="PROSITE-ProRule" id="PRU00191"/>
    </source>
</evidence>
<evidence type="ECO:0000255" key="7">
    <source>
        <dbReference type="PROSITE-ProRule" id="PRU00192"/>
    </source>
</evidence>
<evidence type="ECO:0000256" key="8">
    <source>
        <dbReference type="SAM" id="MobiDB-lite"/>
    </source>
</evidence>
<evidence type="ECO:0000269" key="9">
    <source>
    </source>
</evidence>
<evidence type="ECO:0000269" key="10">
    <source>
    </source>
</evidence>
<evidence type="ECO:0000305" key="11"/>
<evidence type="ECO:0007829" key="12">
    <source>
        <dbReference type="PDB" id="1BFI"/>
    </source>
</evidence>
<evidence type="ECO:0007829" key="13">
    <source>
        <dbReference type="PDB" id="1OO3"/>
    </source>
</evidence>
<evidence type="ECO:0007829" key="14">
    <source>
        <dbReference type="PDB" id="1OO4"/>
    </source>
</evidence>
<evidence type="ECO:0007829" key="15">
    <source>
        <dbReference type="PDB" id="1PNJ"/>
    </source>
</evidence>
<evidence type="ECO:0007829" key="16">
    <source>
        <dbReference type="PDB" id="1QAD"/>
    </source>
</evidence>
<evidence type="ECO:0007829" key="17">
    <source>
        <dbReference type="PDB" id="2PNA"/>
    </source>
</evidence>
<evidence type="ECO:0007829" key="18">
    <source>
        <dbReference type="PDB" id="6D85"/>
    </source>
</evidence>
<evidence type="ECO:0007829" key="19">
    <source>
        <dbReference type="PDB" id="6R4R"/>
    </source>
</evidence>
<evidence type="ECO:0007829" key="20">
    <source>
        <dbReference type="PDB" id="7JIS"/>
    </source>
</evidence>
<keyword id="KW-0002">3D-structure</keyword>
<keyword id="KW-0007">Acetylation</keyword>
<keyword id="KW-0343">GTPase activation</keyword>
<keyword id="KW-0597">Phosphoprotein</keyword>
<keyword id="KW-0653">Protein transport</keyword>
<keyword id="KW-1185">Reference proteome</keyword>
<keyword id="KW-0677">Repeat</keyword>
<keyword id="KW-0727">SH2 domain</keyword>
<keyword id="KW-0728">SH3 domain</keyword>
<keyword id="KW-0346">Stress response</keyword>
<keyword id="KW-0813">Transport</keyword>
<keyword id="KW-0832">Ubl conjugation</keyword>
<comment type="function">
    <text evidence="2 3">Binds to activated (phosphorylated) protein-Tyr kinases, through its SH2 domain, and acts as an adapter, mediating the association of the p110 catalytic unit to the plasma membrane. Necessary for the insulin-stimulated increase in glucose uptake and glycogen synthesis in insulin-sensitive tissues. Plays an important role in signaling in response to FGFR1, FGFR2, FGFR3, FGFR4, KITLG/SCF, KIT, PDGFRA and PDGFRB. Likewise, plays a role in ITGB2 signaling. Modulates the cellular response to ER stress by promoting nuclear translocation of XBP1 in a ER stress- and/or insulin-dependent manner during metabolic overloading in the liver and hence plays a role in glucose tolerance improvement (By similarity).</text>
</comment>
<comment type="subunit">
    <text evidence="2 3 4 9">Heterodimer of a regulatory subunit PIK3R1 and a p110 catalytic subunit (PIK3CA, PIK3CB or PIK3CD). Interacts (via SH2 domains) with CCDC88A/GIV (tyrosine-phosphorylated form); the interaction enables recruitment of PIK3R1 to the EGFR receptor, enhancing PI3K activity and cell migration (By similarity). Interacts with PIK3R2; the interaction is dissociated in an insulin-dependent manner (By similarity). Interacts with XBP1; the interaction is direct and induces translocation of XBP1 into the nucleus in a ER stress- and/or insulin-dependent but PI3K-independent manner (By similarity). Interacts with phosphorylated LAT, LAX1, TRAT1 and LIME1 upon TCR and/or BCR activation. Interacts with CBLB. The SH2 domains interact with the YTHM motif of phosphorylated INSR in vitro. Also interacts with tyrosine-phosphorylated IGF1R in vitro. Interacts with CD28 and CD3Z upon T-cell activation. Interacts with SOCS7. Interacts with IRS1, IRS2 and phosphorylated IRS4, as well as with NISCH and HCST. Interacts with LYN (via SH3 domain); this enhances enzyme activity. Interacts with AXL, FASLG, FER, FGR, HCK, KIT and BCR. Interacts (via SH2 domain) with TEK/TIE2 (tyrosine phosphorylated) (By similarity). Interacts with PDGFRA (tyrosine phosphorylated). Interacts with ERBB4 (phosphorylated) (By similarity). Interacts with NTRK1 (phosphorylated upon ligand-binding). Interacts with PTK2/FAK1 (By similarity). Interacts with PDGFRB (tyrosine phosphorylated) (PubMed:1375321). Interacts (via SH2 domain) with CSF1R (tyrosine phosphorylated) (By similarity). Interacts with FAM83B; activates the PI3K/AKT signaling cascade (By similarity). Interacts with APPL1 and APPL2 (By similarity). Interacts with SRC (By similarity). Interacts with ALOX5; this interaction bridges ALOX5 with CD40 after CD40 ligation in B cells and leads to the production of reactive oxygen species (ROS) (By similarity). Interacts with TYK2 (By similarity). Interacts with nephrin NPHN1; the interaction is reduced by high glucose levels (By similarity). Interacts with CD28 (By similarity). Interacts with ICOS (By similarity).</text>
</comment>
<comment type="interaction">
    <interactant intactId="EBI-520244">
        <id>P23727</id>
    </interactant>
    <interactant intactId="EBI-1373130">
        <id>P32871</id>
        <label>PIK3CA</label>
    </interactant>
    <organismsDiffer>false</organismsDiffer>
    <experiments>4</experiments>
</comment>
<comment type="interaction">
    <interactant intactId="EBI-520244">
        <id>P23727</id>
    </interactant>
    <interactant intactId="EBI-520244">
        <id>P23727</id>
        <label>PIK3R1</label>
    </interactant>
    <organismsDiffer>false</organismsDiffer>
    <experiments>4</experiments>
</comment>
<comment type="interaction">
    <interactant intactId="EBI-520244">
        <id>P23727</id>
    </interactant>
    <interactant intactId="EBI-1452545">
        <id>Q9ES52-1</id>
        <label>Inpp5d</label>
    </interactant>
    <organismsDiffer>true</organismsDiffer>
    <experiments>2</experiments>
</comment>
<comment type="interaction">
    <interactant intactId="EBI-520244">
        <id>P23727</id>
    </interactant>
    <interactant intactId="EBI-1364">
        <id>Q07666</id>
        <label>KHDRBS1</label>
    </interactant>
    <organismsDiffer>true</organismsDiffer>
    <experiments>2</experiments>
</comment>
<comment type="interaction">
    <interactant intactId="EBI-520244">
        <id>P23727</id>
    </interactant>
    <interactant intactId="EBI-641237">
        <id>P09619</id>
        <label>PDGFRB</label>
    </interactant>
    <organismsDiffer>true</organismsDiffer>
    <experiments>6</experiments>
</comment>
<comment type="interaction">
    <interactant intactId="EBI-520244">
        <id>P23727</id>
    </interactant>
    <interactant intactId="EBI-399437">
        <id>P20339</id>
        <label>RAB5A</label>
    </interactant>
    <organismsDiffer>true</organismsDiffer>
    <experiments>5</experiments>
</comment>
<comment type="domain">
    <text evidence="1">The SH3 domain mediates the binding to CBLB.</text>
</comment>
<comment type="PTM">
    <text evidence="1">Polyubiquitinated in T-cells by CBLB; which does not promote proteasomal degradation but impairs association with CD28 and CD3Z upon T-cell activation.</text>
</comment>
<comment type="PTM">
    <text evidence="1 10">Phosphorylated. Tyrosine phosphorylated in response to signaling by FGFR1, FGFR2, FGFR3 and FGFR4. Phosphorylated in response to KIT and KITLG/SCF. Phosphorylated on tyrosine residues by TEK/TIE2. Phosphorylated by FGR. Phosphorylated by CSF1R. Phosphorylated by ERBB4. Dephosphorylated by PTPRJ (By similarity). Phosphorylated by PIK3CA at Ser-608; phosphorylation is stimulated by insulin and PDGF. The relevance of phosphorylation by PIK3CA is however unclear.</text>
</comment>
<comment type="PTM">
    <text evidence="2">In adipose tissue, polyubiquitinated by the BCR(KBTBD2) E3 ubiquitin ligase complex; recognized by KBTBD2 through the SH2 domains, undergoes 'Lys-48'-linked polyubiquitination leading to its degradation.</text>
</comment>
<comment type="similarity">
    <text evidence="11">Belongs to the PI3K p85 subunit family.</text>
</comment>
<name>P85A_BOVIN</name>
<proteinExistence type="evidence at protein level"/>
<feature type="initiator methionine" description="Removed" evidence="3">
    <location>
        <position position="1"/>
    </location>
</feature>
<feature type="chain" id="PRO_0000080757" description="Phosphatidylinositol 3-kinase regulatory subunit alpha">
    <location>
        <begin position="2"/>
        <end position="724"/>
    </location>
</feature>
<feature type="domain" description="SH3" evidence="7">
    <location>
        <begin position="3"/>
        <end position="79"/>
    </location>
</feature>
<feature type="domain" description="Rho-GAP" evidence="5">
    <location>
        <begin position="113"/>
        <end position="301"/>
    </location>
</feature>
<feature type="domain" description="SH2 1" evidence="6">
    <location>
        <begin position="333"/>
        <end position="428"/>
    </location>
</feature>
<feature type="domain" description="SH2 2" evidence="6">
    <location>
        <begin position="624"/>
        <end position="718"/>
    </location>
</feature>
<feature type="region of interest" description="Disordered" evidence="8">
    <location>
        <begin position="79"/>
        <end position="112"/>
    </location>
</feature>
<feature type="compositionally biased region" description="Pro residues" evidence="8">
    <location>
        <begin position="84"/>
        <end position="99"/>
    </location>
</feature>
<feature type="site" description="Arginine finger; crucial for GTP hydrolysis by stabilizing the transition state" evidence="5">
    <location>
        <position position="151"/>
    </location>
</feature>
<feature type="modified residue" description="N-acetylserine" evidence="3">
    <location>
        <position position="2"/>
    </location>
</feature>
<feature type="modified residue" description="Phosphoserine" evidence="3">
    <location>
        <position position="154"/>
    </location>
</feature>
<feature type="modified residue" description="Phosphoserine" evidence="3">
    <location>
        <position position="279"/>
    </location>
</feature>
<feature type="modified residue" description="Phosphotyrosine" evidence="2">
    <location>
        <position position="467"/>
    </location>
</feature>
<feature type="modified residue" description="Phosphotyrosine" evidence="3">
    <location>
        <position position="580"/>
    </location>
</feature>
<feature type="modified residue" description="Phosphoserine" evidence="10">
    <location>
        <position position="608"/>
    </location>
</feature>
<feature type="strand" evidence="15">
    <location>
        <begin position="7"/>
        <end position="10"/>
    </location>
</feature>
<feature type="strand" evidence="19">
    <location>
        <begin position="15"/>
        <end position="19"/>
    </location>
</feature>
<feature type="strand" evidence="19">
    <location>
        <begin position="23"/>
        <end position="25"/>
    </location>
</feature>
<feature type="strand" evidence="19">
    <location>
        <begin position="29"/>
        <end position="35"/>
    </location>
</feature>
<feature type="strand" evidence="19">
    <location>
        <begin position="37"/>
        <end position="42"/>
    </location>
</feature>
<feature type="strand" evidence="19">
    <location>
        <begin position="51"/>
        <end position="56"/>
    </location>
</feature>
<feature type="strand" evidence="19">
    <location>
        <begin position="61"/>
        <end position="68"/>
    </location>
</feature>
<feature type="strand" evidence="19">
    <location>
        <begin position="71"/>
        <end position="76"/>
    </location>
</feature>
<feature type="helix" evidence="18">
    <location>
        <begin position="118"/>
        <end position="121"/>
    </location>
</feature>
<feature type="helix" evidence="18">
    <location>
        <begin position="130"/>
        <end position="143"/>
    </location>
</feature>
<feature type="turn" evidence="18">
    <location>
        <begin position="147"/>
        <end position="150"/>
    </location>
</feature>
<feature type="helix" evidence="18">
    <location>
        <begin position="158"/>
        <end position="165"/>
    </location>
</feature>
<feature type="helix" evidence="18">
    <location>
        <begin position="174"/>
        <end position="176"/>
    </location>
</feature>
<feature type="helix" evidence="18">
    <location>
        <begin position="179"/>
        <end position="192"/>
    </location>
</feature>
<feature type="strand" evidence="18">
    <location>
        <begin position="193"/>
        <end position="195"/>
    </location>
</feature>
<feature type="helix" evidence="18">
    <location>
        <begin position="200"/>
        <end position="208"/>
    </location>
</feature>
<feature type="turn" evidence="18">
    <location>
        <begin position="209"/>
        <end position="212"/>
    </location>
</feature>
<feature type="helix" evidence="18">
    <location>
        <begin position="216"/>
        <end position="227"/>
    </location>
</feature>
<feature type="helix" evidence="18">
    <location>
        <begin position="235"/>
        <end position="251"/>
    </location>
</feature>
<feature type="helix" evidence="18">
    <location>
        <begin position="254"/>
        <end position="257"/>
    </location>
</feature>
<feature type="helix" evidence="18">
    <location>
        <begin position="261"/>
        <end position="273"/>
    </location>
</feature>
<feature type="helix" evidence="18">
    <location>
        <begin position="283"/>
        <end position="295"/>
    </location>
</feature>
<feature type="strand" evidence="14">
    <location>
        <begin position="331"/>
        <end position="333"/>
    </location>
</feature>
<feature type="turn" evidence="13">
    <location>
        <begin position="341"/>
        <end position="344"/>
    </location>
</feature>
<feature type="helix" evidence="13">
    <location>
        <begin position="345"/>
        <end position="349"/>
    </location>
</feature>
<feature type="strand" evidence="13">
    <location>
        <begin position="354"/>
        <end position="357"/>
    </location>
</feature>
<feature type="turn" evidence="13">
    <location>
        <begin position="362"/>
        <end position="364"/>
    </location>
</feature>
<feature type="strand" evidence="13">
    <location>
        <begin position="370"/>
        <end position="378"/>
    </location>
</feature>
<feature type="strand" evidence="17">
    <location>
        <begin position="386"/>
        <end position="388"/>
    </location>
</feature>
<feature type="strand" evidence="13">
    <location>
        <begin position="393"/>
        <end position="395"/>
    </location>
</feature>
<feature type="turn" evidence="13">
    <location>
        <begin position="403"/>
        <end position="405"/>
    </location>
</feature>
<feature type="turn" evidence="13">
    <location>
        <begin position="408"/>
        <end position="411"/>
    </location>
</feature>
<feature type="helix" evidence="13">
    <location>
        <begin position="413"/>
        <end position="415"/>
    </location>
</feature>
<feature type="turn" evidence="13">
    <location>
        <begin position="418"/>
        <end position="420"/>
    </location>
</feature>
<feature type="helix" evidence="20">
    <location>
        <begin position="442"/>
        <end position="514"/>
    </location>
</feature>
<feature type="helix" evidence="20">
    <location>
        <begin position="518"/>
        <end position="586"/>
    </location>
</feature>
<feature type="helix" evidence="20">
    <location>
        <begin position="591"/>
        <end position="598"/>
    </location>
</feature>
<feature type="helix" evidence="16">
    <location>
        <begin position="617"/>
        <end position="619"/>
    </location>
</feature>
<feature type="helix" evidence="16">
    <location>
        <begin position="621"/>
        <end position="623"/>
    </location>
</feature>
<feature type="strand" evidence="16">
    <location>
        <begin position="625"/>
        <end position="628"/>
    </location>
</feature>
<feature type="helix" evidence="16">
    <location>
        <begin position="631"/>
        <end position="638"/>
    </location>
</feature>
<feature type="strand" evidence="16">
    <location>
        <begin position="645"/>
        <end position="650"/>
    </location>
</feature>
<feature type="strand" evidence="12">
    <location>
        <begin position="652"/>
        <end position="655"/>
    </location>
</feature>
<feature type="strand" evidence="16">
    <location>
        <begin position="657"/>
        <end position="663"/>
    </location>
</feature>
<feature type="strand" evidence="16">
    <location>
        <begin position="666"/>
        <end position="675"/>
    </location>
</feature>
<feature type="strand" evidence="16">
    <location>
        <begin position="678"/>
        <end position="682"/>
    </location>
</feature>
<feature type="strand" evidence="16">
    <location>
        <begin position="688"/>
        <end position="690"/>
    </location>
</feature>
<feature type="helix" evidence="16">
    <location>
        <begin position="691"/>
        <end position="700"/>
    </location>
</feature>
<feature type="helix" evidence="16">
    <location>
        <begin position="703"/>
        <end position="705"/>
    </location>
</feature>
<reference key="1">
    <citation type="journal article" date="1991" name="Cell">
        <title>Characterization of two 85 kd proteins that associate with receptor tyrosine kinases, middle-T/pp60c-src complexes, and PI3-kinase.</title>
        <authorList>
            <person name="Otsu M."/>
            <person name="Hiles I.D."/>
            <person name="Goot I."/>
            <person name="Fry M.J."/>
            <person name="Ruiz-Larrea F."/>
            <person name="Panayotou G."/>
            <person name="Thompson A."/>
            <person name="Dhand R."/>
            <person name="Hsuan J."/>
            <person name="Totty N."/>
            <person name="Smith A.D."/>
            <person name="Morgan S.J."/>
            <person name="Courtneidge S.A."/>
            <person name="Parker P.J."/>
            <person name="Waterfield M.D."/>
        </authorList>
    </citation>
    <scope>NUCLEOTIDE SEQUENCE [MRNA]</scope>
</reference>
<reference key="2">
    <citation type="journal article" date="1992" name="EMBO J.">
        <title>Interaction of the p85 subunit of PI 3-kinase and its N-terminal SH2 domain with a PDGF receptor phosphorylation site: structural features and analysis of conformational changes.</title>
        <authorList>
            <person name="Panayotou G."/>
            <person name="Bax B."/>
            <person name="Gout I."/>
            <person name="Federwisch M."/>
            <person name="Wroblowski B."/>
            <person name="Dhand R."/>
            <person name="Fry M.J."/>
            <person name="Blundell T.L."/>
            <person name="Wollmer A."/>
            <person name="Waterfield M.D."/>
        </authorList>
    </citation>
    <scope>CIRCULAR DICHROISM ANALYSIS</scope>
    <scope>FLUORESCENCE SPECTROSCOPY</scope>
</reference>
<reference key="3">
    <citation type="journal article" date="1992" name="Mol. Cell. Biol.">
        <title>GTPase-activating protein and phosphatidylinositol 3-kinase bind to distinct regions of the platelet-derived growth factor receptor beta subunit.</title>
        <authorList>
            <person name="Kazlauskas A."/>
            <person name="Kashishian A."/>
            <person name="Cooper J.A."/>
            <person name="Valius M."/>
        </authorList>
    </citation>
    <scope>INTERACTION WITH PDGFRB</scope>
</reference>
<reference key="4">
    <citation type="journal article" date="1993" name="Cell">
        <title>Solution structure and ligand-binding site of the SH3 domain of the p85 alpha subunit of phosphatidylinositol 3-kinase.</title>
        <authorList>
            <person name="Booker G.W."/>
            <person name="Gout I."/>
            <person name="Downing A.K."/>
            <person name="Driscoll P.C."/>
            <person name="Boyd J."/>
            <person name="Waterfield M.D."/>
            <person name="Campbell I.D."/>
        </authorList>
    </citation>
    <scope>STRUCTURE BY NMR OF 1-84</scope>
</reference>
<reference key="5">
    <citation type="journal article" date="1992" name="Nature">
        <title>Structure of an SH2 domain of the p85 alpha subunit of phosphatidylinositol-3-OH kinase.</title>
        <authorList>
            <person name="Booker G.W."/>
            <person name="Breeze A.L."/>
            <person name="Downing A.K."/>
            <person name="Panayotou G."/>
            <person name="Gout I."/>
            <person name="Waterfield M.D."/>
            <person name="Campbell I.D."/>
        </authorList>
    </citation>
    <scope>STRUCTURE BY NMR OF 314-431</scope>
</reference>
<reference key="6">
    <citation type="journal article" date="1996" name="Biochemistry">
        <title>NMR analysis of interactions of a phosphatidylinositol 3'-kinase SH2 domain with phosphotyrosine peptides reveals interdependence of major binding sites.</title>
        <authorList>
            <person name="Guenther U.L."/>
            <person name="Liu Y."/>
            <person name="Sanford D."/>
            <person name="Bachovchin W.W."/>
            <person name="Schaffhausen B."/>
        </authorList>
    </citation>
    <scope>STRUCTURE BY NMR OF 321-434</scope>
</reference>
<reference key="7">
    <citation type="journal article" date="1998" name="J. Mol. Biol.">
        <title>Solution structure of the C-terminal SH2 domain of the p85 alpha regulatory subunit of phosphoinositide 3-kinase.</title>
        <authorList>
            <person name="Siegal G."/>
            <person name="Davis B."/>
            <person name="Kristensen S.M."/>
            <person name="Sankar A."/>
            <person name="Linacre J."/>
            <person name="Stein R.C."/>
            <person name="Panayotou G."/>
            <person name="Waterfield M.D."/>
            <person name="Driscoll P.C."/>
        </authorList>
    </citation>
    <scope>STRUCTURE BY NMR OF 614-724</scope>
</reference>
<reference key="8">
    <citation type="journal article" date="2004" name="Mol. Cell. Biol.">
        <title>Regulation of phosphoinositide 3-kinase by its intrinsic serine kinase activity in vivo.</title>
        <authorList>
            <person name="Foukas L.C."/>
            <person name="Beeton C.A."/>
            <person name="Jensen J."/>
            <person name="Phillips W.A."/>
            <person name="Shepherd P.R."/>
        </authorList>
    </citation>
    <scope>PHOSPHORYLATION AT SER-608</scope>
</reference>
<gene>
    <name type="primary">PIK3R1</name>
</gene>
<organism>
    <name type="scientific">Bos taurus</name>
    <name type="common">Bovine</name>
    <dbReference type="NCBI Taxonomy" id="9913"/>
    <lineage>
        <taxon>Eukaryota</taxon>
        <taxon>Metazoa</taxon>
        <taxon>Chordata</taxon>
        <taxon>Craniata</taxon>
        <taxon>Vertebrata</taxon>
        <taxon>Euteleostomi</taxon>
        <taxon>Mammalia</taxon>
        <taxon>Eutheria</taxon>
        <taxon>Laurasiatheria</taxon>
        <taxon>Artiodactyla</taxon>
        <taxon>Ruminantia</taxon>
        <taxon>Pecora</taxon>
        <taxon>Bovidae</taxon>
        <taxon>Bovinae</taxon>
        <taxon>Bos</taxon>
    </lineage>
</organism>
<sequence>MSAEGYQYRALYDYKKEREEDIDLHLGDILTVNKGSLVALGFSDGQEAKPEEIGWLNGYNETTGERGDFPGTYVEYIGRKKISPPTPKPRPPRPLPVAPGPSKTEADSEQQASTLPDLAEQFAPPDVAPPLLIKLVEAIEKKGLECSTLYRTQSSSNPAELRQLLDCDTASLDLEMFDVHVLADAFKRYLLDLPNPVIPVAVSSELISLAPEVQSSEEYIQLLKKLIRSPSIPHQYWLTLQYLLKHFFKLSQTSSKNLLNARVLSELFSPLLFRFPAASSENTEHLIKIIEILISTEWNERQPAPALPPKPPKPTTVANNGMNNNMSLQDAEWYWGDISREEVNEKLRDTADGTFLVRDASTKMHGDYTLTLRKGGNNKLIKIFHRDGKYGFSDPLTFNSVVELINHYRNESLAQYNPKLDVKLLYPVSKYQQDQVVKEDNIEAVGKKLHEYNTQFQEKSREYDRLYEDYTRTSQEIQMKRTAIEAFNETIKIFEEQCQTQERYSKEYIEKFKREGNETEIQRIMHNYEKLKSRISEIVDSRRRLEEDLKKQAAEYREIDKRMNSIKPDLIQLRKTRDQYLMWLTQKGVRQKKLNEWLGNENTEDQYSLVEDDEDLPHHDEKTWNVGSSNRNKAENLLRGKRDGTFLVRESSKQGCYACSVVVDGEVKHCVINKTATGYGFAEPYNLYSSLKELVLHYQHTSLVQHNDSLNVTLAYPVYAQQRR</sequence>
<protein>
    <recommendedName>
        <fullName>Phosphatidylinositol 3-kinase regulatory subunit alpha</fullName>
        <shortName>PI3-kinase regulatory subunit alpha</shortName>
        <shortName>PI3K regulatory subunit alpha</shortName>
        <shortName>PtdIns-3-kinase regulatory subunit alpha</shortName>
    </recommendedName>
    <alternativeName>
        <fullName>Phosphatidylinositol 3-kinase 85 kDa regulatory subunit alpha</fullName>
        <shortName>PI3-kinase subunit p85-alpha</shortName>
        <shortName>PtdIns-3-kinase regulatory subunit p85-alpha</shortName>
    </alternativeName>
</protein>
<accession>P23727</accession>